<keyword id="KW-0002">3D-structure</keyword>
<keyword id="KW-0175">Coiled coil</keyword>
<keyword id="KW-0225">Disease variant</keyword>
<keyword id="KW-0238">DNA-binding</keyword>
<keyword id="KW-0887">Epilepsy</keyword>
<keyword id="KW-0371">Homeobox</keyword>
<keyword id="KW-0539">Nucleus</keyword>
<keyword id="KW-0597">Phosphoprotein</keyword>
<keyword id="KW-1267">Proteomics identification</keyword>
<keyword id="KW-1185">Reference proteome</keyword>
<keyword id="KW-0677">Repeat</keyword>
<keyword id="KW-0804">Transcription</keyword>
<keyword id="KW-0805">Transcription regulation</keyword>
<comment type="function">
    <text evidence="1">Transcription factor involved in the control of neuronal proliferation and differentiation in the brain. Regulates dendrite development and branching, dendritic spine formation, and synaptogenesis in cortical layers II-III. Binds to DNA in a sequence-specific manner.</text>
</comment>
<comment type="subcellular location">
    <subcellularLocation>
        <location evidence="3 4">Nucleus</location>
    </subcellularLocation>
</comment>
<comment type="disease" evidence="7 8">
    <disease id="DI-05345">
        <name>Developmental and epileptic encephalopathy 67</name>
        <acronym>DEE67</acronym>
        <description>A form of epileptic encephalopathy, a heterogeneous group of severe early-onset epilepsies characterized by refractory seizures, neurodevelopmental impairment, and poor prognosis. Development is normal prior to seizure onset, after which cognitive and motor delays become apparent. DEE67 is an autosomal dominant form characterized by onset of seizures in infancy. Later onset of seizures in childhood may occur in some patients.</description>
        <dbReference type="MIM" id="618141"/>
    </disease>
    <text>The disease is caused by variants affecting the gene represented in this entry.</text>
</comment>
<comment type="similarity">
    <text evidence="10">Belongs to the CUT homeobox family.</text>
</comment>
<comment type="sequence caution" evidence="10">
    <conflict type="erroneous initiation">
        <sequence resource="EMBL-CDS" id="BAA22962"/>
    </conflict>
    <text>Extended N-terminus.</text>
</comment>
<gene>
    <name type="primary">CUX2</name>
    <name type="synonym">CUTL2</name>
    <name type="synonym">KIAA0293</name>
</gene>
<dbReference type="EMBL" id="AB006631">
    <property type="protein sequence ID" value="BAA22962.2"/>
    <property type="status" value="ALT_INIT"/>
    <property type="molecule type" value="mRNA"/>
</dbReference>
<dbReference type="EMBL" id="AC005805">
    <property type="status" value="NOT_ANNOTATED_CDS"/>
    <property type="molecule type" value="Genomic_DNA"/>
</dbReference>
<dbReference type="EMBL" id="AC002979">
    <property type="status" value="NOT_ANNOTATED_CDS"/>
    <property type="molecule type" value="Genomic_DNA"/>
</dbReference>
<dbReference type="EMBL" id="AC002352">
    <property type="status" value="NOT_ANNOTATED_CDS"/>
    <property type="molecule type" value="Genomic_DNA"/>
</dbReference>
<dbReference type="EMBL" id="AC002978">
    <property type="status" value="NOT_ANNOTATED_CDS"/>
    <property type="molecule type" value="Genomic_DNA"/>
</dbReference>
<dbReference type="EMBL" id="BC151245">
    <property type="protein sequence ID" value="AAI51246.1"/>
    <property type="molecule type" value="mRNA"/>
</dbReference>
<dbReference type="CCDS" id="CCDS41837.1"/>
<dbReference type="RefSeq" id="NP_056082.2">
    <property type="nucleotide sequence ID" value="NM_015267.4"/>
</dbReference>
<dbReference type="PDB" id="1WH6">
    <property type="method" value="NMR"/>
    <property type="chains" value="A=887-974"/>
</dbReference>
<dbReference type="PDB" id="1WH8">
    <property type="method" value="NMR"/>
    <property type="chains" value="A=1028-1125"/>
</dbReference>
<dbReference type="PDB" id="1X2L">
    <property type="method" value="NMR"/>
    <property type="chains" value="A=544-631"/>
</dbReference>
<dbReference type="PDBsum" id="1WH6"/>
<dbReference type="PDBsum" id="1WH8"/>
<dbReference type="PDBsum" id="1X2L"/>
<dbReference type="SMR" id="O14529"/>
<dbReference type="BioGRID" id="116907">
    <property type="interactions" value="14"/>
</dbReference>
<dbReference type="FunCoup" id="O14529">
    <property type="interactions" value="495"/>
</dbReference>
<dbReference type="IntAct" id="O14529">
    <property type="interactions" value="8"/>
</dbReference>
<dbReference type="STRING" id="9606.ENSP00000261726"/>
<dbReference type="GlyGen" id="O14529">
    <property type="glycosylation" value="3 sites"/>
</dbReference>
<dbReference type="iPTMnet" id="O14529"/>
<dbReference type="PhosphoSitePlus" id="O14529"/>
<dbReference type="BioMuta" id="CUX2"/>
<dbReference type="jPOST" id="O14529"/>
<dbReference type="MassIVE" id="O14529"/>
<dbReference type="PaxDb" id="9606-ENSP00000261726"/>
<dbReference type="PeptideAtlas" id="O14529"/>
<dbReference type="ProteomicsDB" id="48075"/>
<dbReference type="Antibodypedia" id="31073">
    <property type="antibodies" value="78 antibodies from 20 providers"/>
</dbReference>
<dbReference type="DNASU" id="23316"/>
<dbReference type="Ensembl" id="ENST00000261726.11">
    <property type="protein sequence ID" value="ENSP00000261726.6"/>
    <property type="gene ID" value="ENSG00000111249.14"/>
</dbReference>
<dbReference type="GeneID" id="23316"/>
<dbReference type="KEGG" id="hsa:23316"/>
<dbReference type="MANE-Select" id="ENST00000261726.11">
    <property type="protein sequence ID" value="ENSP00000261726.6"/>
    <property type="RefSeq nucleotide sequence ID" value="NM_015267.4"/>
    <property type="RefSeq protein sequence ID" value="NP_056082.2"/>
</dbReference>
<dbReference type="UCSC" id="uc001tsa.4">
    <property type="organism name" value="human"/>
</dbReference>
<dbReference type="AGR" id="HGNC:19347"/>
<dbReference type="CTD" id="23316"/>
<dbReference type="DisGeNET" id="23316"/>
<dbReference type="GeneCards" id="CUX2"/>
<dbReference type="HGNC" id="HGNC:19347">
    <property type="gene designation" value="CUX2"/>
</dbReference>
<dbReference type="HPA" id="ENSG00000111249">
    <property type="expression patterns" value="Tissue enhanced (brain, choroid plexus, liver, prostate)"/>
</dbReference>
<dbReference type="MalaCards" id="CUX2"/>
<dbReference type="MIM" id="610648">
    <property type="type" value="gene"/>
</dbReference>
<dbReference type="MIM" id="618141">
    <property type="type" value="phenotype"/>
</dbReference>
<dbReference type="neXtProt" id="NX_O14529"/>
<dbReference type="OpenTargets" id="ENSG00000111249"/>
<dbReference type="Orphanet" id="2382">
    <property type="disease" value="Lennox-Gastaut syndrome"/>
</dbReference>
<dbReference type="PharmGKB" id="PA162382977"/>
<dbReference type="VEuPathDB" id="HostDB:ENSG00000111249"/>
<dbReference type="eggNOG" id="KOG0963">
    <property type="taxonomic scope" value="Eukaryota"/>
</dbReference>
<dbReference type="eggNOG" id="KOG2252">
    <property type="taxonomic scope" value="Eukaryota"/>
</dbReference>
<dbReference type="GeneTree" id="ENSGT00940000160241"/>
<dbReference type="HOGENOM" id="CLU_005104_1_0_1"/>
<dbReference type="InParanoid" id="O14529"/>
<dbReference type="OMA" id="FHNYSRM"/>
<dbReference type="OrthoDB" id="10257567at2759"/>
<dbReference type="PAN-GO" id="O14529">
    <property type="GO annotations" value="4 GO annotations based on evolutionary models"/>
</dbReference>
<dbReference type="PhylomeDB" id="O14529"/>
<dbReference type="TreeFam" id="TF318206"/>
<dbReference type="PathwayCommons" id="O14529"/>
<dbReference type="SignaLink" id="O14529"/>
<dbReference type="SIGNOR" id="O14529"/>
<dbReference type="BioGRID-ORCS" id="23316">
    <property type="hits" value="18 hits in 1169 CRISPR screens"/>
</dbReference>
<dbReference type="ChiTaRS" id="CUX2">
    <property type="organism name" value="human"/>
</dbReference>
<dbReference type="EvolutionaryTrace" id="O14529"/>
<dbReference type="GenomeRNAi" id="23316"/>
<dbReference type="Pharos" id="O14529">
    <property type="development level" value="Tbio"/>
</dbReference>
<dbReference type="PRO" id="PR:O14529"/>
<dbReference type="Proteomes" id="UP000005640">
    <property type="component" value="Chromosome 12"/>
</dbReference>
<dbReference type="RNAct" id="O14529">
    <property type="molecule type" value="protein"/>
</dbReference>
<dbReference type="Bgee" id="ENSG00000111249">
    <property type="expression patterns" value="Expressed in middle temporal gyrus and 111 other cell types or tissues"/>
</dbReference>
<dbReference type="ExpressionAtlas" id="O14529">
    <property type="expression patterns" value="baseline and differential"/>
</dbReference>
<dbReference type="GO" id="GO:0000785">
    <property type="term" value="C:chromatin"/>
    <property type="evidence" value="ECO:0000247"/>
    <property type="project" value="NTNU_SB"/>
</dbReference>
<dbReference type="GO" id="GO:0070062">
    <property type="term" value="C:extracellular exosome"/>
    <property type="evidence" value="ECO:0007005"/>
    <property type="project" value="UniProtKB"/>
</dbReference>
<dbReference type="GO" id="GO:0005634">
    <property type="term" value="C:nucleus"/>
    <property type="evidence" value="ECO:0000314"/>
    <property type="project" value="UniProtKB"/>
</dbReference>
<dbReference type="GO" id="GO:0000981">
    <property type="term" value="F:DNA-binding transcription factor activity, RNA polymerase II-specific"/>
    <property type="evidence" value="ECO:0000247"/>
    <property type="project" value="NTNU_SB"/>
</dbReference>
<dbReference type="GO" id="GO:0001227">
    <property type="term" value="F:DNA-binding transcription repressor activity, RNA polymerase II-specific"/>
    <property type="evidence" value="ECO:0007669"/>
    <property type="project" value="Ensembl"/>
</dbReference>
<dbReference type="GO" id="GO:0000978">
    <property type="term" value="F:RNA polymerase II cis-regulatory region sequence-specific DNA binding"/>
    <property type="evidence" value="ECO:0007669"/>
    <property type="project" value="Ensembl"/>
</dbReference>
<dbReference type="GO" id="GO:0000977">
    <property type="term" value="F:RNA polymerase II transcription regulatory region sequence-specific DNA binding"/>
    <property type="evidence" value="ECO:0000250"/>
    <property type="project" value="CAFA"/>
</dbReference>
<dbReference type="GO" id="GO:0043565">
    <property type="term" value="F:sequence-specific DNA binding"/>
    <property type="evidence" value="ECO:0000314"/>
    <property type="project" value="UniProtKB"/>
</dbReference>
<dbReference type="GO" id="GO:1990837">
    <property type="term" value="F:sequence-specific double-stranded DNA binding"/>
    <property type="evidence" value="ECO:0000314"/>
    <property type="project" value="ARUK-UCL"/>
</dbReference>
<dbReference type="GO" id="GO:0050890">
    <property type="term" value="P:cognition"/>
    <property type="evidence" value="ECO:0000315"/>
    <property type="project" value="UniProtKB"/>
</dbReference>
<dbReference type="GO" id="GO:0000122">
    <property type="term" value="P:negative regulation of transcription by RNA polymerase II"/>
    <property type="evidence" value="ECO:0000314"/>
    <property type="project" value="UniProtKB"/>
</dbReference>
<dbReference type="GO" id="GO:0050775">
    <property type="term" value="P:positive regulation of dendrite morphogenesis"/>
    <property type="evidence" value="ECO:0000250"/>
    <property type="project" value="CAFA"/>
</dbReference>
<dbReference type="GO" id="GO:0061003">
    <property type="term" value="P:positive regulation of dendritic spine morphogenesis"/>
    <property type="evidence" value="ECO:0000250"/>
    <property type="project" value="CAFA"/>
</dbReference>
<dbReference type="GO" id="GO:2000463">
    <property type="term" value="P:positive regulation of excitatory postsynaptic potential"/>
    <property type="evidence" value="ECO:0000250"/>
    <property type="project" value="CAFA"/>
</dbReference>
<dbReference type="GO" id="GO:0010628">
    <property type="term" value="P:positive regulation of gene expression"/>
    <property type="evidence" value="ECO:0000250"/>
    <property type="project" value="CAFA"/>
</dbReference>
<dbReference type="GO" id="GO:0051965">
    <property type="term" value="P:positive regulation of synapse assembly"/>
    <property type="evidence" value="ECO:0000250"/>
    <property type="project" value="CAFA"/>
</dbReference>
<dbReference type="GO" id="GO:0006357">
    <property type="term" value="P:regulation of transcription by RNA polymerase II"/>
    <property type="evidence" value="ECO:0000318"/>
    <property type="project" value="GO_Central"/>
</dbReference>
<dbReference type="GO" id="GO:0007614">
    <property type="term" value="P:short-term memory"/>
    <property type="evidence" value="ECO:0000250"/>
    <property type="project" value="CAFA"/>
</dbReference>
<dbReference type="CDD" id="cd00086">
    <property type="entry name" value="homeodomain"/>
    <property type="match status" value="1"/>
</dbReference>
<dbReference type="FunFam" id="1.10.260.40:FF:000004">
    <property type="entry name" value="Cut-like homeobox 1a"/>
    <property type="match status" value="2"/>
</dbReference>
<dbReference type="FunFam" id="1.10.260.40:FF:000010">
    <property type="entry name" value="Cut-like homeobox 1a"/>
    <property type="match status" value="1"/>
</dbReference>
<dbReference type="FunFam" id="1.10.10.60:FF:000116">
    <property type="entry name" value="Cut-like homeobox 2b"/>
    <property type="match status" value="1"/>
</dbReference>
<dbReference type="Gene3D" id="1.10.10.60">
    <property type="entry name" value="Homeodomain-like"/>
    <property type="match status" value="1"/>
</dbReference>
<dbReference type="Gene3D" id="1.10.260.40">
    <property type="entry name" value="lambda repressor-like DNA-binding domains"/>
    <property type="match status" value="3"/>
</dbReference>
<dbReference type="InterPro" id="IPR003350">
    <property type="entry name" value="CUT_dom"/>
</dbReference>
<dbReference type="InterPro" id="IPR001356">
    <property type="entry name" value="HD"/>
</dbReference>
<dbReference type="InterPro" id="IPR017970">
    <property type="entry name" value="Homeobox_CS"/>
</dbReference>
<dbReference type="InterPro" id="IPR009057">
    <property type="entry name" value="Homeodomain-like_sf"/>
</dbReference>
<dbReference type="InterPro" id="IPR010982">
    <property type="entry name" value="Lambda_DNA-bd_dom_sf"/>
</dbReference>
<dbReference type="PANTHER" id="PTHR14043">
    <property type="entry name" value="CCAAT DISPLACEMENT PROTEIN-RELATED"/>
    <property type="match status" value="1"/>
</dbReference>
<dbReference type="PANTHER" id="PTHR14043:SF5">
    <property type="entry name" value="HOMEOBOX PROTEIN CUT-LIKE 2"/>
    <property type="match status" value="1"/>
</dbReference>
<dbReference type="Pfam" id="PF02376">
    <property type="entry name" value="CUT"/>
    <property type="match status" value="3"/>
</dbReference>
<dbReference type="Pfam" id="PF25398">
    <property type="entry name" value="CUX1_N"/>
    <property type="match status" value="1"/>
</dbReference>
<dbReference type="Pfam" id="PF00046">
    <property type="entry name" value="Homeodomain"/>
    <property type="match status" value="1"/>
</dbReference>
<dbReference type="SMART" id="SM01109">
    <property type="entry name" value="CUT"/>
    <property type="match status" value="3"/>
</dbReference>
<dbReference type="SMART" id="SM00389">
    <property type="entry name" value="HOX"/>
    <property type="match status" value="1"/>
</dbReference>
<dbReference type="SUPFAM" id="SSF46689">
    <property type="entry name" value="Homeodomain-like"/>
    <property type="match status" value="1"/>
</dbReference>
<dbReference type="SUPFAM" id="SSF47413">
    <property type="entry name" value="lambda repressor-like DNA-binding domains"/>
    <property type="match status" value="3"/>
</dbReference>
<dbReference type="PROSITE" id="PS51042">
    <property type="entry name" value="CUT"/>
    <property type="match status" value="3"/>
</dbReference>
<dbReference type="PROSITE" id="PS00027">
    <property type="entry name" value="HOMEOBOX_1"/>
    <property type="match status" value="1"/>
</dbReference>
<dbReference type="PROSITE" id="PS50071">
    <property type="entry name" value="HOMEOBOX_2"/>
    <property type="match status" value="1"/>
</dbReference>
<sequence length="1486" mass="161677">MAANVGSMFQYWKRFDLRRLQKELNSVASELSARQEESEHSHKHLIELRREFKKNVPEEIREMVAPVLKSFQAEVVALSKRSQEAEAAFLSVYKQLIEAPDPVPVFEAARSLDDRLQPPSFDPSGQPRRDLHTSWKRNPELLSPKEQREGTSPAGPTLTEGSRLPGIPGKALLTETLLQRNEAEKQKGLQEVQITLAARLGEAEEKIKVLHSALKATQAELLELRRKYDEEAASKADEVGLIMTNLEKANQRAEAAQREVESLREQLASVNSSIRLACCSPQGPSGDKVNFTLCSGPRLEAALASKDREILRLLKDVQHLQSSLQELEEASANQIADLERQLTAKSEAIEKLEEKLQAQSDYEEIKTELSILKAMKLASSTCSLPQGMAKPEDSLLIAKEAFFPTQKFLLEKPSLLASPEEDPSEDDSIKDSLGTEQSYPSPQQLPPPPGPEDPLSPSPGQPLLGPSLGPDGTRTFSLSPFPSLASGERLMMPPAAFKGEAGGLLVFPPAFYGAKPPTAPATPAPGPEPLGGPEPADGGGGGAAGPGAEEEQLDTAEIAFQVKEQLLKHNIGQRVFGHYVLGLSQGSVSEILARPKPWRKLTVKGKEPFIKMKQFLSDEQNVLALRTIQVRQRGSITPRIRTPETGSDDAIKSILEQAKKEIESQKGGEPKTSVAPLSIANGTTPASTSEDAIKSILEQARREMQAQQQALLEMEVAPRGRSVPPSPPERPSLATASQNGAPALVKQEEGSGGPAQAPLPVLSPAAFVQSIIRKVKSEIGDAGYFDHHWASDRGLLSRPYASVSPSLSSSSSSGYSGQPNGRAWPRGDEAPVPPEDEAAAGAEDEPPRTGELKAEGATAEAGARLPYYPAYVPRTLKPTVPPLTPEQYELYMYREVDTLELTRQVKEKLAKNGICQRIFGEKVLGLSQGSVSDMLSRPKPWSKLTQKGREPFIRMQLWLSDQLGQAVGQQPGASQASPTEPRSSPSPPPSPTEPEKSSQEPLSLSLESSKENQQPEGRSSSSLSGKMYSGSQAPGGIQEIVAMSPELDTYSITKRVKEVLTDNNLGQRLFGESILGLTQGSVSDLLSRPKPWHKLSLKGREPFVRMQLWLNDPHNVEKLRDMKKLEKKAYLKRRYGLISTGSDSESPATRSECPSPCLQPQDLSLLQIKKPRVVLAPEEKEALRKAYQLEPYPSQQTIELLSFQLNLKTNTVINWFHNYRSRMRREMLVEGTQDEPDLDPSGGPGILPPGHSHPDPTPQSPDSETEDQKPTVKELELQEGPEENSTPLTTQDKAQVRIKQEQMEEDAEEEAGSQPQDSGELDKGQGPPKEEHPDPPGNDGLPKVAPGPLLPGGSTPDCPSLHPQQESEAGERLHPDPLSFKSASESSRCSLEVSLNSPSAASSPGLMMSVSPVPSSSAPISPSPPGAPPAKVPSASPTADMAGALHPSAKVNPNLQRRHEKMANLNNIIYRVERAANREEALEWEF</sequence>
<proteinExistence type="evidence at protein level"/>
<name>CUX2_HUMAN</name>
<feature type="chain" id="PRO_0000202396" description="Homeobox protein cut-like 2">
    <location>
        <begin position="1"/>
        <end position="1486"/>
    </location>
</feature>
<feature type="DNA-binding region" description="CUT 1" evidence="4">
    <location>
        <begin position="544"/>
        <end position="631"/>
    </location>
</feature>
<feature type="DNA-binding region" description="CUT 2" evidence="4">
    <location>
        <begin position="887"/>
        <end position="974"/>
    </location>
</feature>
<feature type="DNA-binding region" description="CUT 3" evidence="4">
    <location>
        <begin position="1038"/>
        <end position="1125"/>
    </location>
</feature>
<feature type="DNA-binding region" description="Homeobox" evidence="3">
    <location>
        <begin position="1168"/>
        <end position="1227"/>
    </location>
</feature>
<feature type="region of interest" description="Disordered" evidence="5">
    <location>
        <begin position="114"/>
        <end position="167"/>
    </location>
</feature>
<feature type="region of interest" description="Disordered" evidence="5">
    <location>
        <begin position="415"/>
        <end position="481"/>
    </location>
</feature>
<feature type="region of interest" description="Disordered" evidence="5">
    <location>
        <begin position="517"/>
        <end position="549"/>
    </location>
</feature>
<feature type="region of interest" description="Disordered" evidence="5">
    <location>
        <begin position="661"/>
        <end position="690"/>
    </location>
</feature>
<feature type="region of interest" description="Disordered" evidence="5">
    <location>
        <begin position="716"/>
        <end position="758"/>
    </location>
</feature>
<feature type="region of interest" description="Disordered" evidence="5">
    <location>
        <begin position="800"/>
        <end position="858"/>
    </location>
</feature>
<feature type="region of interest" description="Disordered" evidence="5">
    <location>
        <begin position="964"/>
        <end position="1032"/>
    </location>
</feature>
<feature type="region of interest" description="Disordered" evidence="5">
    <location>
        <begin position="1231"/>
        <end position="1453"/>
    </location>
</feature>
<feature type="coiled-coil region" evidence="2">
    <location>
        <begin position="195"/>
        <end position="374"/>
    </location>
</feature>
<feature type="coiled-coil region" evidence="2">
    <location>
        <begin position="690"/>
        <end position="717"/>
    </location>
</feature>
<feature type="compositionally biased region" description="Basic and acidic residues" evidence="5">
    <location>
        <begin position="127"/>
        <end position="149"/>
    </location>
</feature>
<feature type="compositionally biased region" description="Acidic residues" evidence="5">
    <location>
        <begin position="419"/>
        <end position="428"/>
    </location>
</feature>
<feature type="compositionally biased region" description="Pro residues" evidence="5">
    <location>
        <begin position="443"/>
        <end position="460"/>
    </location>
</feature>
<feature type="compositionally biased region" description="Low complexity" evidence="5">
    <location>
        <begin position="461"/>
        <end position="470"/>
    </location>
</feature>
<feature type="compositionally biased region" description="Pro residues" evidence="5">
    <location>
        <begin position="517"/>
        <end position="532"/>
    </location>
</feature>
<feature type="compositionally biased region" description="Polar residues" evidence="5">
    <location>
        <begin position="680"/>
        <end position="690"/>
    </location>
</feature>
<feature type="compositionally biased region" description="Low complexity" evidence="5">
    <location>
        <begin position="802"/>
        <end position="816"/>
    </location>
</feature>
<feature type="compositionally biased region" description="Acidic residues" evidence="5">
    <location>
        <begin position="834"/>
        <end position="844"/>
    </location>
</feature>
<feature type="compositionally biased region" description="Basic and acidic residues" evidence="5">
    <location>
        <begin position="845"/>
        <end position="854"/>
    </location>
</feature>
<feature type="compositionally biased region" description="Polar residues" evidence="5">
    <location>
        <begin position="967"/>
        <end position="976"/>
    </location>
</feature>
<feature type="compositionally biased region" description="Low complexity" evidence="5">
    <location>
        <begin position="1017"/>
        <end position="1031"/>
    </location>
</feature>
<feature type="compositionally biased region" description="Basic and acidic residues" evidence="5">
    <location>
        <begin position="1266"/>
        <end position="1276"/>
    </location>
</feature>
<feature type="compositionally biased region" description="Polar residues" evidence="5">
    <location>
        <begin position="1283"/>
        <end position="1293"/>
    </location>
</feature>
<feature type="compositionally biased region" description="Basic and acidic residues" evidence="5">
    <location>
        <begin position="1320"/>
        <end position="1334"/>
    </location>
</feature>
<feature type="compositionally biased region" description="Polar residues" evidence="5">
    <location>
        <begin position="1381"/>
        <end position="1401"/>
    </location>
</feature>
<feature type="compositionally biased region" description="Low complexity" evidence="5">
    <location>
        <begin position="1402"/>
        <end position="1420"/>
    </location>
</feature>
<feature type="compositionally biased region" description="Pro residues" evidence="5">
    <location>
        <begin position="1421"/>
        <end position="1431"/>
    </location>
</feature>
<feature type="modified residue" description="Phosphoserine" evidence="11">
    <location>
        <position position="143"/>
    </location>
</feature>
<feature type="sequence variant" id="VAR_081600" description="In DEE67; dbSNP:rs1565909334." evidence="7 8">
    <original>E</original>
    <variation>K</variation>
    <location>
        <position position="590"/>
    </location>
</feature>
<feature type="sequence variant" id="VAR_065096" description="In dbSNP:rs6490073." evidence="6 9">
    <original>V</original>
    <variation>L</variation>
    <location>
        <position position="1472"/>
    </location>
</feature>
<feature type="helix" evidence="14">
    <location>
        <begin position="555"/>
        <end position="568"/>
    </location>
</feature>
<feature type="helix" evidence="14">
    <location>
        <begin position="573"/>
        <end position="579"/>
    </location>
</feature>
<feature type="helix" evidence="14">
    <location>
        <begin position="585"/>
        <end position="593"/>
    </location>
</feature>
<feature type="helix" evidence="14">
    <location>
        <begin position="598"/>
        <end position="600"/>
    </location>
</feature>
<feature type="helix" evidence="14">
    <location>
        <begin position="603"/>
        <end position="616"/>
    </location>
</feature>
<feature type="helix" evidence="14">
    <location>
        <begin position="620"/>
        <end position="630"/>
    </location>
</feature>
<feature type="helix" evidence="12">
    <location>
        <begin position="889"/>
        <end position="893"/>
    </location>
</feature>
<feature type="helix" evidence="12">
    <location>
        <begin position="898"/>
        <end position="910"/>
    </location>
</feature>
<feature type="turn" evidence="12">
    <location>
        <begin position="911"/>
        <end position="913"/>
    </location>
</feature>
<feature type="helix" evidence="12">
    <location>
        <begin position="916"/>
        <end position="922"/>
    </location>
</feature>
<feature type="helix" evidence="12">
    <location>
        <begin position="928"/>
        <end position="936"/>
    </location>
</feature>
<feature type="turn" evidence="12">
    <location>
        <begin position="941"/>
        <end position="943"/>
    </location>
</feature>
<feature type="helix" evidence="12">
    <location>
        <begin position="946"/>
        <end position="961"/>
    </location>
</feature>
<feature type="helix" evidence="13">
    <location>
        <begin position="1037"/>
        <end position="1043"/>
    </location>
</feature>
<feature type="helix" evidence="13">
    <location>
        <begin position="1049"/>
        <end position="1062"/>
    </location>
</feature>
<feature type="helix" evidence="13">
    <location>
        <begin position="1067"/>
        <end position="1073"/>
    </location>
</feature>
<feature type="helix" evidence="13">
    <location>
        <begin position="1079"/>
        <end position="1087"/>
    </location>
</feature>
<feature type="turn" evidence="13">
    <location>
        <begin position="1092"/>
        <end position="1094"/>
    </location>
</feature>
<feature type="helix" evidence="13">
    <location>
        <begin position="1097"/>
        <end position="1111"/>
    </location>
</feature>
<feature type="helix" evidence="13">
    <location>
        <begin position="1115"/>
        <end position="1123"/>
    </location>
</feature>
<reference key="1">
    <citation type="journal article" date="1997" name="DNA Res.">
        <title>Construction and characterization of human brain cDNA libraries suitable for analysis of cDNA clones encoding relatively large proteins.</title>
        <authorList>
            <person name="Ohara O."/>
            <person name="Nagase T."/>
            <person name="Ishikawa K."/>
            <person name="Nakajima D."/>
            <person name="Ohira M."/>
            <person name="Seki N."/>
            <person name="Nomura N."/>
        </authorList>
    </citation>
    <scope>NUCLEOTIDE SEQUENCE [LARGE SCALE MRNA]</scope>
    <scope>VARIANT LEU-1472</scope>
    <source>
        <tissue>Brain</tissue>
    </source>
</reference>
<reference key="2">
    <citation type="journal article" date="2002" name="DNA Res.">
        <title>Construction of expression-ready cDNA clones for KIAA genes: manual curation of 330 KIAA cDNA clones.</title>
        <authorList>
            <person name="Nakajima D."/>
            <person name="Okazaki N."/>
            <person name="Yamakawa H."/>
            <person name="Kikuno R."/>
            <person name="Ohara O."/>
            <person name="Nagase T."/>
        </authorList>
    </citation>
    <scope>SEQUENCE REVISION</scope>
</reference>
<reference key="3">
    <citation type="journal article" date="2006" name="Nature">
        <title>The finished DNA sequence of human chromosome 12.</title>
        <authorList>
            <person name="Scherer S.E."/>
            <person name="Muzny D.M."/>
            <person name="Buhay C.J."/>
            <person name="Chen R."/>
            <person name="Cree A."/>
            <person name="Ding Y."/>
            <person name="Dugan-Rocha S."/>
            <person name="Gill R."/>
            <person name="Gunaratne P."/>
            <person name="Harris R.A."/>
            <person name="Hawes A.C."/>
            <person name="Hernandez J."/>
            <person name="Hodgson A.V."/>
            <person name="Hume J."/>
            <person name="Jackson A."/>
            <person name="Khan Z.M."/>
            <person name="Kovar-Smith C."/>
            <person name="Lewis L.R."/>
            <person name="Lozado R.J."/>
            <person name="Metzker M.L."/>
            <person name="Milosavljevic A."/>
            <person name="Miner G.R."/>
            <person name="Montgomery K.T."/>
            <person name="Morgan M.B."/>
            <person name="Nazareth L.V."/>
            <person name="Scott G."/>
            <person name="Sodergren E."/>
            <person name="Song X.-Z."/>
            <person name="Steffen D."/>
            <person name="Lovering R.C."/>
            <person name="Wheeler D.A."/>
            <person name="Worley K.C."/>
            <person name="Yuan Y."/>
            <person name="Zhang Z."/>
            <person name="Adams C.Q."/>
            <person name="Ansari-Lari M.A."/>
            <person name="Ayele M."/>
            <person name="Brown M.J."/>
            <person name="Chen G."/>
            <person name="Chen Z."/>
            <person name="Clerc-Blankenburg K.P."/>
            <person name="Davis C."/>
            <person name="Delgado O."/>
            <person name="Dinh H.H."/>
            <person name="Draper H."/>
            <person name="Gonzalez-Garay M.L."/>
            <person name="Havlak P."/>
            <person name="Jackson L.R."/>
            <person name="Jacob L.S."/>
            <person name="Kelly S.H."/>
            <person name="Li L."/>
            <person name="Li Z."/>
            <person name="Liu J."/>
            <person name="Liu W."/>
            <person name="Lu J."/>
            <person name="Maheshwari M."/>
            <person name="Nguyen B.-V."/>
            <person name="Okwuonu G.O."/>
            <person name="Pasternak S."/>
            <person name="Perez L.M."/>
            <person name="Plopper F.J.H."/>
            <person name="Santibanez J."/>
            <person name="Shen H."/>
            <person name="Tabor P.E."/>
            <person name="Verduzco D."/>
            <person name="Waldron L."/>
            <person name="Wang Q."/>
            <person name="Williams G.A."/>
            <person name="Zhang J."/>
            <person name="Zhou J."/>
            <person name="Allen C.C."/>
            <person name="Amin A.G."/>
            <person name="Anyalebechi V."/>
            <person name="Bailey M."/>
            <person name="Barbaria J.A."/>
            <person name="Bimage K.E."/>
            <person name="Bryant N.P."/>
            <person name="Burch P.E."/>
            <person name="Burkett C.E."/>
            <person name="Burrell K.L."/>
            <person name="Calderon E."/>
            <person name="Cardenas V."/>
            <person name="Carter K."/>
            <person name="Casias K."/>
            <person name="Cavazos I."/>
            <person name="Cavazos S.R."/>
            <person name="Ceasar H."/>
            <person name="Chacko J."/>
            <person name="Chan S.N."/>
            <person name="Chavez D."/>
            <person name="Christopoulos C."/>
            <person name="Chu J."/>
            <person name="Cockrell R."/>
            <person name="Cox C.D."/>
            <person name="Dang M."/>
            <person name="Dathorne S.R."/>
            <person name="David R."/>
            <person name="Davis C.M."/>
            <person name="Davy-Carroll L."/>
            <person name="Deshazo D.R."/>
            <person name="Donlin J.E."/>
            <person name="D'Souza L."/>
            <person name="Eaves K.A."/>
            <person name="Egan A."/>
            <person name="Emery-Cohen A.J."/>
            <person name="Escotto M."/>
            <person name="Flagg N."/>
            <person name="Forbes L.D."/>
            <person name="Gabisi A.M."/>
            <person name="Garza M."/>
            <person name="Hamilton C."/>
            <person name="Henderson N."/>
            <person name="Hernandez O."/>
            <person name="Hines S."/>
            <person name="Hogues M.E."/>
            <person name="Huang M."/>
            <person name="Idlebird D.G."/>
            <person name="Johnson R."/>
            <person name="Jolivet A."/>
            <person name="Jones S."/>
            <person name="Kagan R."/>
            <person name="King L.M."/>
            <person name="Leal B."/>
            <person name="Lebow H."/>
            <person name="Lee S."/>
            <person name="LeVan J.M."/>
            <person name="Lewis L.C."/>
            <person name="London P."/>
            <person name="Lorensuhewa L.M."/>
            <person name="Loulseged H."/>
            <person name="Lovett D.A."/>
            <person name="Lucier A."/>
            <person name="Lucier R.L."/>
            <person name="Ma J."/>
            <person name="Madu R.C."/>
            <person name="Mapua P."/>
            <person name="Martindale A.D."/>
            <person name="Martinez E."/>
            <person name="Massey E."/>
            <person name="Mawhiney S."/>
            <person name="Meador M.G."/>
            <person name="Mendez S."/>
            <person name="Mercado C."/>
            <person name="Mercado I.C."/>
            <person name="Merritt C.E."/>
            <person name="Miner Z.L."/>
            <person name="Minja E."/>
            <person name="Mitchell T."/>
            <person name="Mohabbat F."/>
            <person name="Mohabbat K."/>
            <person name="Montgomery B."/>
            <person name="Moore N."/>
            <person name="Morris S."/>
            <person name="Munidasa M."/>
            <person name="Ngo R.N."/>
            <person name="Nguyen N.B."/>
            <person name="Nickerson E."/>
            <person name="Nwaokelemeh O.O."/>
            <person name="Nwokenkwo S."/>
            <person name="Obregon M."/>
            <person name="Oguh M."/>
            <person name="Oragunye N."/>
            <person name="Oviedo R.J."/>
            <person name="Parish B.J."/>
            <person name="Parker D.N."/>
            <person name="Parrish J."/>
            <person name="Parks K.L."/>
            <person name="Paul H.A."/>
            <person name="Payton B.A."/>
            <person name="Perez A."/>
            <person name="Perrin W."/>
            <person name="Pickens A."/>
            <person name="Primus E.L."/>
            <person name="Pu L.-L."/>
            <person name="Puazo M."/>
            <person name="Quiles M.M."/>
            <person name="Quiroz J.B."/>
            <person name="Rabata D."/>
            <person name="Reeves K."/>
            <person name="Ruiz S.J."/>
            <person name="Shao H."/>
            <person name="Sisson I."/>
            <person name="Sonaike T."/>
            <person name="Sorelle R.P."/>
            <person name="Sutton A.E."/>
            <person name="Svatek A.F."/>
            <person name="Svetz L.A."/>
            <person name="Tamerisa K.S."/>
            <person name="Taylor T.R."/>
            <person name="Teague B."/>
            <person name="Thomas N."/>
            <person name="Thorn R.D."/>
            <person name="Trejos Z.Y."/>
            <person name="Trevino B.K."/>
            <person name="Ukegbu O.N."/>
            <person name="Urban J.B."/>
            <person name="Vasquez L.I."/>
            <person name="Vera V.A."/>
            <person name="Villasana D.M."/>
            <person name="Wang L."/>
            <person name="Ward-Moore S."/>
            <person name="Warren J.T."/>
            <person name="Wei X."/>
            <person name="White F."/>
            <person name="Williamson A.L."/>
            <person name="Wleczyk R."/>
            <person name="Wooden H.S."/>
            <person name="Wooden S.H."/>
            <person name="Yen J."/>
            <person name="Yoon L."/>
            <person name="Yoon V."/>
            <person name="Zorrilla S.E."/>
            <person name="Nelson D."/>
            <person name="Kucherlapati R."/>
            <person name="Weinstock G."/>
            <person name="Gibbs R.A."/>
        </authorList>
    </citation>
    <scope>NUCLEOTIDE SEQUENCE [LARGE SCALE GENOMIC DNA]</scope>
</reference>
<reference key="4">
    <citation type="journal article" date="2004" name="Genome Res.">
        <title>The status, quality, and expansion of the NIH full-length cDNA project: the Mammalian Gene Collection (MGC).</title>
        <authorList>
            <consortium name="The MGC Project Team"/>
        </authorList>
    </citation>
    <scope>NUCLEOTIDE SEQUENCE [LARGE SCALE MRNA]</scope>
    <scope>VARIANT LEU-1472</scope>
    <source>
        <tissue>Brain</tissue>
    </source>
</reference>
<reference key="5">
    <citation type="journal article" date="2008" name="Proc. Natl. Acad. Sci. U.S.A.">
        <title>A quantitative atlas of mitotic phosphorylation.</title>
        <authorList>
            <person name="Dephoure N."/>
            <person name="Zhou C."/>
            <person name="Villen J."/>
            <person name="Beausoleil S.A."/>
            <person name="Bakalarski C.E."/>
            <person name="Elledge S.J."/>
            <person name="Gygi S.P."/>
        </authorList>
    </citation>
    <scope>PHOSPHORYLATION [LARGE SCALE ANALYSIS] AT SER-143</scope>
    <scope>IDENTIFICATION BY MASS SPECTROMETRY [LARGE SCALE ANALYSIS]</scope>
    <source>
        <tissue>Cervix carcinoma</tissue>
    </source>
</reference>
<reference key="6">
    <citation type="journal article" date="2018" name="Ann. Neurol.">
        <title>The epilepsy phenotypic spectrum associated with a recurrent CUX2 variant.</title>
        <authorList>
            <person name="Chatron N."/>
            <person name="Moeller R.S."/>
            <person name="Champaigne N.L."/>
            <person name="Schneider A.L."/>
            <person name="Kuechler A."/>
            <person name="Labalme A."/>
            <person name="Simonet T."/>
            <person name="Baggett L."/>
            <person name="Bardel C."/>
            <person name="Kamsteeg E.J."/>
            <person name="Pfundt R."/>
            <person name="Romano C."/>
            <person name="Aronsson J."/>
            <person name="Alberti A."/>
            <person name="Vinci M."/>
            <person name="Miranda M.J."/>
            <person name="Lacroix A."/>
            <person name="Marjanovic D."/>
            <person name="des Portes V."/>
            <person name="Edery P."/>
            <person name="Wieczorek D."/>
            <person name="Gardella E."/>
            <person name="Scheffer I.E."/>
            <person name="Mefford H."/>
            <person name="Sanlaville D."/>
            <person name="Carvill G.L."/>
            <person name="Lesca G."/>
        </authorList>
    </citation>
    <scope>INVOLVEMENT IN DEE67</scope>
    <scope>VARIANT DEE67 LYS-590</scope>
</reference>
<reference key="7">
    <citation type="journal article" date="2018" name="Eur. J. Hum. Genet.">
        <title>A recurrent de novo CUX2 missense variant associated with intellectual disability, seizures, and autism spectrum disorder.</title>
        <authorList>
            <person name="Barington M."/>
            <person name="Risom L."/>
            <person name="Ek J."/>
            <person name="Uldall P."/>
            <person name="Ostergaard E."/>
        </authorList>
    </citation>
    <scope>INVOLVEMENT IN DEE67</scope>
    <scope>VARIANT DEE67 LYS-590</scope>
</reference>
<reference key="8">
    <citation type="submission" date="2005-10" db="PDB data bank">
        <title>Solution structure of the first, second and third CUT domains of human homeobox protein CUX-2 (CUT-like 2).</title>
        <authorList>
            <consortium name="RIKEN structural genomics initiative (RSGI)"/>
        </authorList>
    </citation>
    <scope>STRUCTURE BY NMR OF 544-631 AND 887-1125</scope>
</reference>
<protein>
    <recommendedName>
        <fullName>Homeobox protein cut-like 2</fullName>
    </recommendedName>
    <alternativeName>
        <fullName>Homeobox protein cux-2</fullName>
    </alternativeName>
</protein>
<evidence type="ECO:0000250" key="1">
    <source>
        <dbReference type="UniProtKB" id="P70298"/>
    </source>
</evidence>
<evidence type="ECO:0000255" key="2"/>
<evidence type="ECO:0000255" key="3">
    <source>
        <dbReference type="PROSITE-ProRule" id="PRU00108"/>
    </source>
</evidence>
<evidence type="ECO:0000255" key="4">
    <source>
        <dbReference type="PROSITE-ProRule" id="PRU00374"/>
    </source>
</evidence>
<evidence type="ECO:0000256" key="5">
    <source>
        <dbReference type="SAM" id="MobiDB-lite"/>
    </source>
</evidence>
<evidence type="ECO:0000269" key="6">
    <source>
    </source>
</evidence>
<evidence type="ECO:0000269" key="7">
    <source>
    </source>
</evidence>
<evidence type="ECO:0000269" key="8">
    <source>
    </source>
</evidence>
<evidence type="ECO:0000269" key="9">
    <source>
    </source>
</evidence>
<evidence type="ECO:0000305" key="10"/>
<evidence type="ECO:0007744" key="11">
    <source>
    </source>
</evidence>
<evidence type="ECO:0007829" key="12">
    <source>
        <dbReference type="PDB" id="1WH6"/>
    </source>
</evidence>
<evidence type="ECO:0007829" key="13">
    <source>
        <dbReference type="PDB" id="1WH8"/>
    </source>
</evidence>
<evidence type="ECO:0007829" key="14">
    <source>
        <dbReference type="PDB" id="1X2L"/>
    </source>
</evidence>
<accession>O14529</accession>
<accession>A7E2Y4</accession>
<organism>
    <name type="scientific">Homo sapiens</name>
    <name type="common">Human</name>
    <dbReference type="NCBI Taxonomy" id="9606"/>
    <lineage>
        <taxon>Eukaryota</taxon>
        <taxon>Metazoa</taxon>
        <taxon>Chordata</taxon>
        <taxon>Craniata</taxon>
        <taxon>Vertebrata</taxon>
        <taxon>Euteleostomi</taxon>
        <taxon>Mammalia</taxon>
        <taxon>Eutheria</taxon>
        <taxon>Euarchontoglires</taxon>
        <taxon>Primates</taxon>
        <taxon>Haplorrhini</taxon>
        <taxon>Catarrhini</taxon>
        <taxon>Hominidae</taxon>
        <taxon>Homo</taxon>
    </lineage>
</organism>